<keyword id="KW-0007">Acetylation</keyword>
<keyword id="KW-0025">Alternative splicing</keyword>
<keyword id="KW-0156">Chromatin regulator</keyword>
<keyword id="KW-0175">Coiled coil</keyword>
<keyword id="KW-1017">Isopeptide bond</keyword>
<keyword id="KW-0479">Metal-binding</keyword>
<keyword id="KW-0539">Nucleus</keyword>
<keyword id="KW-0597">Phosphoprotein</keyword>
<keyword id="KW-1267">Proteomics identification</keyword>
<keyword id="KW-1185">Reference proteome</keyword>
<keyword id="KW-0804">Transcription</keyword>
<keyword id="KW-0805">Transcription regulation</keyword>
<keyword id="KW-0832">Ubl conjugation</keyword>
<keyword id="KW-0862">Zinc</keyword>
<keyword id="KW-0863">Zinc-finger</keyword>
<sequence>MATAAAAAAVMAPPGCPGSCPNFAVVCSFLERYGPLLDLPELPFPELERVLQAPPPDVGNGEVPKELVELHLKLMRKIGKSVTADRWEKYLIKICQEFNSTWAWEMEKKGYLEMSVECKLALLKYLCECQFDDNLKFKNIINEEDADTMRLQPIGRDKDGLMYWYQLDQDHNVRMYIEEQDDQDGSSWKCIVRNRNELAETLALLKAQIDPVLLKNSSQQDNSSRESPSLEDEETKKEEETPKQEEQKESEKMKSEEQPMDLENRSTANVLEETTVKKEKEDEKELVKLPVIVKLEKPLPENEEKKIIKEESDSFKENVKPIKVEVKECRADPKDTKSSMEKPVAQEPERIEFGGNIKSSHEITEKSTEETEKLKNDQQAKIPLKKREIKLSDDFDSPVKGPLCKSVTPTKEFLKDEIKQEEETCKRISTITALGHEGKQLVNGEVSDERVAPNFKTEPIETKFYETKEESYSPSKDRNIITEGNGTESLNSVITSMKTGELEKETAPLRKDADSSISVLEIHSQKAQIEEPDPPEMETSLDSSEMAKDLSSKTALSSTESCTMKGEEKSPKTKKDKRPPILECLEKLEKSKKTFLDKDAQRLSPIPEEVPKSTLESEKPGSPEAAETSPPSNIIDHCEKLASEKEVVECQSTSTVGGQSVKKVDLETLKEDSEFTKVEMDNLDNAQTSGIEEPSETKGSMQKSKFKYKLVPEEETTASENTEITSERQKEGIKLTIRISSRKKKPDSPPKVLEPENKQEKTEKEEEKTNVGRTLRRSPRISRPTAKVAEIRDQKADKKRGEGEDEVEEESTALQKTDKKEILKKSEKDTNSKVSKVKPKGKVRWTGSRTRGRWKYSSNDESEGSGSEKSSAASEEEEEKESEEAILADDDEPCKKCGLPNHPELILLCDSCDSGYHTACLRPPLMIIPDGEWFCPPCQHKLLCEKLEEQLQDLDVALKKKERAERRKERLVYVGISIENIIPPQEPDFSEDQEEKKKDSKKSKANLLERRSTRTRKCISYRFDEFDEAIDEAIEDDIKEADGGGVGRGKDISTITGHRGKDISTILDEERKENKRPQRAAAARRKKRRRLNDLDSDSNLDEEESEDEFKISDGSQDEFVVSDENPDESEEDPPSNDDSDTDFCSRRLRRHPSRPMRQSRRLRRKTPKKKYSDDDEEEESEENSRDSESDFSDDFSDDFVETRRRRSRRNQKRQINYKEDSESDGSQKSLRRGKEIRRVHKRRLSSSESEESYLSKNSEDDELAKESKRSVRKRGRSTDEYSEADEEEEEEEGKPSRKRLHRIETDEEESCDNAHGDANQPARDSQPRVLPSEQESTKKPYRIESDEEEDFENVGKVGSPLDYSLVDLPSTNGQSPGKAIENLIGKPTEKSQTPKDNSTASASLASNGTSGGQEAGAPEEEEDELLRVTDLVDYVCNSEQL</sequence>
<reference key="1">
    <citation type="journal article" date="2002" name="Genomics">
        <title>HBXAP, a novel PHD-finger protein, possesses transcription repression activity.</title>
        <authorList>
            <person name="Shamay M."/>
            <person name="Barak O."/>
            <person name="Shaul Y."/>
        </authorList>
    </citation>
    <scope>NUCLEOTIDE SEQUENCE [MRNA] (ISOFORM 3)</scope>
    <scope>NUCLEOTIDE SEQUENCE [MRNA] OF 4-1441 (ISOFORMS 1 AND 2)</scope>
    <scope>FUNCTION</scope>
    <scope>INTERACTION WITH PX OF HBV</scope>
    <scope>SUBCELLULAR LOCATION</scope>
</reference>
<reference key="2">
    <citation type="journal article" date="2002" name="J. Biol. Chem.">
        <title>Hepatitis B virus pX interacts with HBXAP, a PHD finger protein to coactivate transcription.</title>
        <authorList>
            <person name="Shamay M."/>
            <person name="Barak O."/>
            <person name="Doitsh G."/>
            <person name="Ben-Dor I."/>
            <person name="Shaul Y."/>
        </authorList>
    </citation>
    <scope>NUCLEOTIDE SEQUENCE [MRNA] (ISOFORM 3)</scope>
    <scope>INTERACTION WITH PX OF HBV</scope>
    <scope>SUBCELLULAR LOCATION</scope>
    <scope>FUNCTION</scope>
    <source>
        <tissue>Spleen</tissue>
    </source>
</reference>
<reference key="3">
    <citation type="journal article" date="2006" name="Nature">
        <title>Human chromosome 11 DNA sequence and analysis including novel gene identification.</title>
        <authorList>
            <person name="Taylor T.D."/>
            <person name="Noguchi H."/>
            <person name="Totoki Y."/>
            <person name="Toyoda A."/>
            <person name="Kuroki Y."/>
            <person name="Dewar K."/>
            <person name="Lloyd C."/>
            <person name="Itoh T."/>
            <person name="Takeda T."/>
            <person name="Kim D.-W."/>
            <person name="She X."/>
            <person name="Barlow K.F."/>
            <person name="Bloom T."/>
            <person name="Bruford E."/>
            <person name="Chang J.L."/>
            <person name="Cuomo C.A."/>
            <person name="Eichler E."/>
            <person name="FitzGerald M.G."/>
            <person name="Jaffe D.B."/>
            <person name="LaButti K."/>
            <person name="Nicol R."/>
            <person name="Park H.-S."/>
            <person name="Seaman C."/>
            <person name="Sougnez C."/>
            <person name="Yang X."/>
            <person name="Zimmer A.R."/>
            <person name="Zody M.C."/>
            <person name="Birren B.W."/>
            <person name="Nusbaum C."/>
            <person name="Fujiyama A."/>
            <person name="Hattori M."/>
            <person name="Rogers J."/>
            <person name="Lander E.S."/>
            <person name="Sakaki Y."/>
        </authorList>
    </citation>
    <scope>NUCLEOTIDE SEQUENCE [LARGE SCALE GENOMIC DNA]</scope>
</reference>
<reference key="4">
    <citation type="submission" date="1998-04" db="EMBL/GenBank/DDBJ databases">
        <authorList>
            <person name="Mao Y.M."/>
            <person name="Xie Y."/>
            <person name="Zheng Z.H."/>
        </authorList>
    </citation>
    <scope>NUCLEOTIDE SEQUENCE [MRNA] OF 111-703</scope>
    <source>
        <tissue>Brain</tissue>
    </source>
</reference>
<reference key="5">
    <citation type="journal article" date="2004" name="Genome Res.">
        <title>The status, quality, and expansion of the NIH full-length cDNA project: the Mammalian Gene Collection (MGC).</title>
        <authorList>
            <consortium name="The MGC Project Team"/>
        </authorList>
    </citation>
    <scope>NUCLEOTIDE SEQUENCE [LARGE SCALE MRNA] OF 200-1002</scope>
    <source>
        <tissue>Lymph</tissue>
    </source>
</reference>
<reference key="6">
    <citation type="journal article" date="2004" name="Nat. Genet.">
        <title>Complete sequencing and characterization of 21,243 full-length human cDNAs.</title>
        <authorList>
            <person name="Ota T."/>
            <person name="Suzuki Y."/>
            <person name="Nishikawa T."/>
            <person name="Otsuki T."/>
            <person name="Sugiyama T."/>
            <person name="Irie R."/>
            <person name="Wakamatsu A."/>
            <person name="Hayashi K."/>
            <person name="Sato H."/>
            <person name="Nagai K."/>
            <person name="Kimura K."/>
            <person name="Makita H."/>
            <person name="Sekine M."/>
            <person name="Obayashi M."/>
            <person name="Nishi T."/>
            <person name="Shibahara T."/>
            <person name="Tanaka T."/>
            <person name="Ishii S."/>
            <person name="Yamamoto J."/>
            <person name="Saito K."/>
            <person name="Kawai Y."/>
            <person name="Isono Y."/>
            <person name="Nakamura Y."/>
            <person name="Nagahari K."/>
            <person name="Murakami K."/>
            <person name="Yasuda T."/>
            <person name="Iwayanagi T."/>
            <person name="Wagatsuma M."/>
            <person name="Shiratori A."/>
            <person name="Sudo H."/>
            <person name="Hosoiri T."/>
            <person name="Kaku Y."/>
            <person name="Kodaira H."/>
            <person name="Kondo H."/>
            <person name="Sugawara M."/>
            <person name="Takahashi M."/>
            <person name="Kanda K."/>
            <person name="Yokoi T."/>
            <person name="Furuya T."/>
            <person name="Kikkawa E."/>
            <person name="Omura Y."/>
            <person name="Abe K."/>
            <person name="Kamihara K."/>
            <person name="Katsuta N."/>
            <person name="Sato K."/>
            <person name="Tanikawa M."/>
            <person name="Yamazaki M."/>
            <person name="Ninomiya K."/>
            <person name="Ishibashi T."/>
            <person name="Yamashita H."/>
            <person name="Murakawa K."/>
            <person name="Fujimori K."/>
            <person name="Tanai H."/>
            <person name="Kimata M."/>
            <person name="Watanabe M."/>
            <person name="Hiraoka S."/>
            <person name="Chiba Y."/>
            <person name="Ishida S."/>
            <person name="Ono Y."/>
            <person name="Takiguchi S."/>
            <person name="Watanabe S."/>
            <person name="Yosida M."/>
            <person name="Hotuta T."/>
            <person name="Kusano J."/>
            <person name="Kanehori K."/>
            <person name="Takahashi-Fujii A."/>
            <person name="Hara H."/>
            <person name="Tanase T.-O."/>
            <person name="Nomura Y."/>
            <person name="Togiya S."/>
            <person name="Komai F."/>
            <person name="Hara R."/>
            <person name="Takeuchi K."/>
            <person name="Arita M."/>
            <person name="Imose N."/>
            <person name="Musashino K."/>
            <person name="Yuuki H."/>
            <person name="Oshima A."/>
            <person name="Sasaki N."/>
            <person name="Aotsuka S."/>
            <person name="Yoshikawa Y."/>
            <person name="Matsunawa H."/>
            <person name="Ichihara T."/>
            <person name="Shiohata N."/>
            <person name="Sano S."/>
            <person name="Moriya S."/>
            <person name="Momiyama H."/>
            <person name="Satoh N."/>
            <person name="Takami S."/>
            <person name="Terashima Y."/>
            <person name="Suzuki O."/>
            <person name="Nakagawa S."/>
            <person name="Senoh A."/>
            <person name="Mizoguchi H."/>
            <person name="Goto Y."/>
            <person name="Shimizu F."/>
            <person name="Wakebe H."/>
            <person name="Hishigaki H."/>
            <person name="Watanabe T."/>
            <person name="Sugiyama A."/>
            <person name="Takemoto M."/>
            <person name="Kawakami B."/>
            <person name="Yamazaki M."/>
            <person name="Watanabe K."/>
            <person name="Kumagai A."/>
            <person name="Itakura S."/>
            <person name="Fukuzumi Y."/>
            <person name="Fujimori Y."/>
            <person name="Komiyama M."/>
            <person name="Tashiro H."/>
            <person name="Tanigami A."/>
            <person name="Fujiwara T."/>
            <person name="Ono T."/>
            <person name="Yamada K."/>
            <person name="Fujii Y."/>
            <person name="Ozaki K."/>
            <person name="Hirao M."/>
            <person name="Ohmori Y."/>
            <person name="Kawabata A."/>
            <person name="Hikiji T."/>
            <person name="Kobatake N."/>
            <person name="Inagaki H."/>
            <person name="Ikema Y."/>
            <person name="Okamoto S."/>
            <person name="Okitani R."/>
            <person name="Kawakami T."/>
            <person name="Noguchi S."/>
            <person name="Itoh T."/>
            <person name="Shigeta K."/>
            <person name="Senba T."/>
            <person name="Matsumura K."/>
            <person name="Nakajima Y."/>
            <person name="Mizuno T."/>
            <person name="Morinaga M."/>
            <person name="Sasaki M."/>
            <person name="Togashi T."/>
            <person name="Oyama M."/>
            <person name="Hata H."/>
            <person name="Watanabe M."/>
            <person name="Komatsu T."/>
            <person name="Mizushima-Sugano J."/>
            <person name="Satoh T."/>
            <person name="Shirai Y."/>
            <person name="Takahashi Y."/>
            <person name="Nakagawa K."/>
            <person name="Okumura K."/>
            <person name="Nagase T."/>
            <person name="Nomura N."/>
            <person name="Kikuchi H."/>
            <person name="Masuho Y."/>
            <person name="Yamashita R."/>
            <person name="Nakai K."/>
            <person name="Yada T."/>
            <person name="Nakamura Y."/>
            <person name="Ohara O."/>
            <person name="Isogai T."/>
            <person name="Sugano S."/>
        </authorList>
    </citation>
    <scope>NUCLEOTIDE SEQUENCE [LARGE SCALE MRNA] OF 494-1068</scope>
</reference>
<reference key="7">
    <citation type="journal article" date="2003" name="Mol. Cell. Biol.">
        <title>Functional analysis of the subunits of the chromatin assembly factor RSF.</title>
        <authorList>
            <person name="Loyola A."/>
            <person name="Huang J.-Y."/>
            <person name="LeRoy G."/>
            <person name="Hu S."/>
            <person name="Wang Y.-H."/>
            <person name="Donnelly R.J."/>
            <person name="Lane W.S."/>
            <person name="Lee S.-C."/>
            <person name="Reinberg D."/>
        </authorList>
    </citation>
    <scope>FUNCTION</scope>
    <scope>IDENTIFICATION IN THE RSF-5 ISWI CHROMATIN-REMODELING COMPLEX</scope>
    <scope>INTERACTION WITH SMARCA5</scope>
    <scope>SUBCELLULAR LOCATION</scope>
    <scope>TISSUE SPECIFICITY</scope>
    <scope>PHOSPHORYLATION</scope>
</reference>
<reference key="8">
    <citation type="journal article" date="2006" name="Cell">
        <title>Global, in vivo, and site-specific phosphorylation dynamics in signaling networks.</title>
        <authorList>
            <person name="Olsen J.V."/>
            <person name="Blagoev B."/>
            <person name="Gnad F."/>
            <person name="Macek B."/>
            <person name="Kumar C."/>
            <person name="Mortensen P."/>
            <person name="Mann M."/>
        </authorList>
    </citation>
    <scope>PHOSPHORYLATION [LARGE SCALE ANALYSIS] AT SER-397; SER-604; SER-622; SER-1096; SER-1098; SER-1105; SER-1345; SER-1359 AND SER-1375</scope>
    <scope>IDENTIFICATION BY MASS SPECTROMETRY [LARGE SCALE ANALYSIS]</scope>
    <source>
        <tissue>Cervix carcinoma</tissue>
    </source>
</reference>
<reference key="9">
    <citation type="journal article" date="2006" name="Nat. Biotechnol.">
        <title>A probability-based approach for high-throughput protein phosphorylation analysis and site localization.</title>
        <authorList>
            <person name="Beausoleil S.A."/>
            <person name="Villen J."/>
            <person name="Gerber S.A."/>
            <person name="Rush J."/>
            <person name="Gygi S.P."/>
        </authorList>
    </citation>
    <scope>PHOSPHORYLATION [LARGE SCALE ANALYSIS] AT SER-1345</scope>
    <scope>IDENTIFICATION BY MASS SPECTROMETRY [LARGE SCALE ANALYSIS]</scope>
    <source>
        <tissue>Cervix carcinoma</tissue>
    </source>
</reference>
<reference key="10">
    <citation type="journal article" date="2007" name="Science">
        <title>ATM and ATR substrate analysis reveals extensive protein networks responsive to DNA damage.</title>
        <authorList>
            <person name="Matsuoka S."/>
            <person name="Ballif B.A."/>
            <person name="Smogorzewska A."/>
            <person name="McDonald E.R. III"/>
            <person name="Hurov K.E."/>
            <person name="Luo J."/>
            <person name="Bakalarski C.E."/>
            <person name="Zhao Z."/>
            <person name="Solimini N."/>
            <person name="Lerenthal Y."/>
            <person name="Shiloh Y."/>
            <person name="Gygi S.P."/>
            <person name="Elledge S.J."/>
        </authorList>
    </citation>
    <scope>PHOSPHORYLATION [LARGE SCALE ANALYSIS] AT SER-524 AND SER-1325</scope>
    <scope>IDENTIFICATION BY MASS SPECTROMETRY [LARGE SCALE ANALYSIS]</scope>
    <source>
        <tissue>Embryonic kidney</tissue>
    </source>
</reference>
<reference key="11">
    <citation type="journal article" date="2008" name="Proc. Natl. Acad. Sci. U.S.A.">
        <title>A quantitative atlas of mitotic phosphorylation.</title>
        <authorList>
            <person name="Dephoure N."/>
            <person name="Zhou C."/>
            <person name="Villen J."/>
            <person name="Beausoleil S.A."/>
            <person name="Bakalarski C.E."/>
            <person name="Elledge S.J."/>
            <person name="Gygi S.P."/>
        </authorList>
    </citation>
    <scope>PHOSPHORYLATION [LARGE SCALE ANALYSIS] AT SER-622; SER-629; SER-1221; SER-1223; SER-1226; SER-1277; THR-1278; THR-1305 AND SER-1359</scope>
    <scope>IDENTIFICATION BY MASS SPECTROMETRY [LARGE SCALE ANALYSIS]</scope>
    <source>
        <tissue>Cervix carcinoma</tissue>
    </source>
</reference>
<reference key="12">
    <citation type="journal article" date="2009" name="Anal. Chem.">
        <title>Lys-N and trypsin cover complementary parts of the phosphoproteome in a refined SCX-based approach.</title>
        <authorList>
            <person name="Gauci S."/>
            <person name="Helbig A.O."/>
            <person name="Slijper M."/>
            <person name="Krijgsveld J."/>
            <person name="Heck A.J."/>
            <person name="Mohammed S."/>
        </authorList>
    </citation>
    <scope>IDENTIFICATION BY MASS SPECTROMETRY [LARGE SCALE ANALYSIS]</scope>
</reference>
<reference key="13">
    <citation type="journal article" date="2009" name="Sci. Signal.">
        <title>Quantitative phosphoproteomic analysis of T cell receptor signaling reveals system-wide modulation of protein-protein interactions.</title>
        <authorList>
            <person name="Mayya V."/>
            <person name="Lundgren D.H."/>
            <person name="Hwang S.-I."/>
            <person name="Rezaul K."/>
            <person name="Wu L."/>
            <person name="Eng J.K."/>
            <person name="Rodionov V."/>
            <person name="Han D.K."/>
        </authorList>
    </citation>
    <scope>PHOSPHORYLATION [LARGE SCALE ANALYSIS] AT THR-1305; SER-1345; SER-1359 AND SER-1375</scope>
    <scope>IDENTIFICATION BY MASS SPECTROMETRY [LARGE SCALE ANALYSIS]</scope>
    <source>
        <tissue>Leukemic T-cell</tissue>
    </source>
</reference>
<reference key="14">
    <citation type="journal article" date="2009" name="Science">
        <title>Lysine acetylation targets protein complexes and co-regulates major cellular functions.</title>
        <authorList>
            <person name="Choudhary C."/>
            <person name="Kumar C."/>
            <person name="Gnad F."/>
            <person name="Nielsen M.L."/>
            <person name="Rehman M."/>
            <person name="Walther T.C."/>
            <person name="Olsen J.V."/>
            <person name="Mann M."/>
        </authorList>
    </citation>
    <scope>ACETYLATION [LARGE SCALE ANALYSIS] AT LYS-1050 AND LYS-1339</scope>
    <scope>IDENTIFICATION BY MASS SPECTROMETRY [LARGE SCALE ANALYSIS]</scope>
</reference>
<reference key="15">
    <citation type="journal article" date="2010" name="Sci. Signal.">
        <title>Quantitative phosphoproteomics reveals widespread full phosphorylation site occupancy during mitosis.</title>
        <authorList>
            <person name="Olsen J.V."/>
            <person name="Vermeulen M."/>
            <person name="Santamaria A."/>
            <person name="Kumar C."/>
            <person name="Miller M.L."/>
            <person name="Jensen L.J."/>
            <person name="Gnad F."/>
            <person name="Cox J."/>
            <person name="Jensen T.S."/>
            <person name="Nigg E.A."/>
            <person name="Brunak S."/>
            <person name="Mann M."/>
        </authorList>
    </citation>
    <scope>PHOSPHORYLATION [LARGE SCALE ANALYSIS] AT SER-227; SER-397; SER-473; SER-604; SER-748; SER-882; SER-1345; SER-1359 AND SER-1375</scope>
    <scope>IDENTIFICATION BY MASS SPECTROMETRY [LARGE SCALE ANALYSIS]</scope>
    <source>
        <tissue>Cervix carcinoma</tissue>
    </source>
</reference>
<reference key="16">
    <citation type="journal article" date="2011" name="Sci. Signal.">
        <title>System-wide temporal characterization of the proteome and phosphoproteome of human embryonic stem cell differentiation.</title>
        <authorList>
            <person name="Rigbolt K.T."/>
            <person name="Prokhorova T.A."/>
            <person name="Akimov V."/>
            <person name="Henningsen J."/>
            <person name="Johansen P.T."/>
            <person name="Kratchmarova I."/>
            <person name="Kassem M."/>
            <person name="Mann M."/>
            <person name="Olsen J.V."/>
            <person name="Blagoev B."/>
        </authorList>
    </citation>
    <scope>PHOSPHORYLATION [LARGE SCALE ANALYSIS] AT SER-227; SER-397; SER-604; SER-748; SER-1221; SER-1226; SER-1258; THR-1305; SER-1345 AND SER-1375</scope>
    <scope>IDENTIFICATION BY MASS SPECTROMETRY [LARGE SCALE ANALYSIS]</scope>
</reference>
<reference key="17">
    <citation type="journal article" date="2013" name="J. Proteome Res.">
        <title>Toward a comprehensive characterization of a human cancer cell phosphoproteome.</title>
        <authorList>
            <person name="Zhou H."/>
            <person name="Di Palma S."/>
            <person name="Preisinger C."/>
            <person name="Peng M."/>
            <person name="Polat A.N."/>
            <person name="Heck A.J."/>
            <person name="Mohammed S."/>
        </authorList>
    </citation>
    <scope>PHOSPHORYLATION [LARGE SCALE ANALYSIS] AT SER-392; SER-397; SER-429; SER-473; SER-570; SER-604; SER-622; SER-748; THR-1305; SER-1336; SER-1345; SER-1359 AND SER-1375</scope>
    <scope>IDENTIFICATION BY MASS SPECTROMETRY [LARGE SCALE ANALYSIS]</scope>
    <source>
        <tissue>Cervix carcinoma</tissue>
        <tissue>Erythroleukemia</tissue>
    </source>
</reference>
<reference key="18">
    <citation type="journal article" date="2014" name="J. Proteomics">
        <title>An enzyme assisted RP-RPLC approach for in-depth analysis of human liver phosphoproteome.</title>
        <authorList>
            <person name="Bian Y."/>
            <person name="Song C."/>
            <person name="Cheng K."/>
            <person name="Dong M."/>
            <person name="Wang F."/>
            <person name="Huang J."/>
            <person name="Sun D."/>
            <person name="Wang L."/>
            <person name="Ye M."/>
            <person name="Zou H."/>
        </authorList>
    </citation>
    <scope>PHOSPHORYLATION [LARGE SCALE ANALYSIS] AT SER-604; THR-628; SER-629; THR-1305 AND SER-1345</scope>
    <scope>IDENTIFICATION BY MASS SPECTROMETRY [LARGE SCALE ANALYSIS]</scope>
    <source>
        <tissue>Liver</tissue>
    </source>
</reference>
<reference key="19">
    <citation type="journal article" date="2014" name="Nat. Struct. Mol. Biol.">
        <title>Uncovering global SUMOylation signaling networks in a site-specific manner.</title>
        <authorList>
            <person name="Hendriks I.A."/>
            <person name="D'Souza R.C."/>
            <person name="Yang B."/>
            <person name="Verlaan-de Vries M."/>
            <person name="Mann M."/>
            <person name="Vertegaal A.C."/>
        </authorList>
    </citation>
    <scope>SUMOYLATION [LARGE SCALE ANALYSIS] AT LYS-254; LYS-277; LYS-294; LYS-309; LYS-323; LYS-337; LYS-390; LYS-419; LYS-456; LYS-468; LYS-663; LYS-670; LYS-677; LYS-758 AND LYS-768</scope>
    <scope>IDENTIFICATION BY MASS SPECTROMETRY [LARGE SCALE ANALYSIS]</scope>
</reference>
<reference key="20">
    <citation type="journal article" date="2014" name="Proc. Natl. Acad. Sci. U.S.A.">
        <title>Mapping of SUMO sites and analysis of SUMOylation changes induced by external stimuli.</title>
        <authorList>
            <person name="Impens F."/>
            <person name="Radoshevich L."/>
            <person name="Cossart P."/>
            <person name="Ribet D."/>
        </authorList>
    </citation>
    <scope>SUMOYLATION [LARGE SCALE ANALYSIS] AT LYS-277 AND LYS-456</scope>
    <scope>IDENTIFICATION BY MASS SPECTROMETRY [LARGE SCALE ANALYSIS]</scope>
</reference>
<reference key="21">
    <citation type="journal article" date="2015" name="Cell Rep.">
        <title>SUMO-2 orchestrates chromatin modifiers in response to DNA damage.</title>
        <authorList>
            <person name="Hendriks I.A."/>
            <person name="Treffers L.W."/>
            <person name="Verlaan-de Vries M."/>
            <person name="Olsen J.V."/>
            <person name="Vertegaal A.C."/>
        </authorList>
    </citation>
    <scope>SUMOYLATION [LARGE SCALE ANALYSIS] AT LYS-254; LYS-277; LYS-284; LYS-294; LYS-309; LYS-323; LYS-419; LYS-456; LYS-670 AND LYS-768</scope>
    <scope>IDENTIFICATION BY MASS SPECTROMETRY [LARGE SCALE ANALYSIS]</scope>
</reference>
<reference key="22">
    <citation type="journal article" date="2015" name="Mol. Cell. Proteomics">
        <title>System-wide analysis of SUMOylation dynamics in response to replication stress reveals novel small ubiquitin-like modified target proteins and acceptor lysines relevant for genome stability.</title>
        <authorList>
            <person name="Xiao Z."/>
            <person name="Chang J.G."/>
            <person name="Hendriks I.A."/>
            <person name="Sigurdsson J.O."/>
            <person name="Olsen J.V."/>
            <person name="Vertegaal A.C."/>
        </authorList>
    </citation>
    <scope>SUMOYLATION [LARGE SCALE ANALYSIS] AT LYS-243; LYS-254; LYS-277; LYS-284; LYS-294; LYS-309; LYS-323; LYS-390; LYS-415; LYS-419; LYS-456; LYS-670 AND LYS-758</scope>
    <scope>IDENTIFICATION BY MASS SPECTROMETRY [LARGE SCALE ANALYSIS]</scope>
</reference>
<reference key="23">
    <citation type="journal article" date="2016" name="Mol. Cell">
        <title>The flexible ends of CENP-A nucleosome are required for mitotic fidelity.</title>
        <authorList>
            <person name="Roulland Y."/>
            <person name="Ouararhni K."/>
            <person name="Naidenov M."/>
            <person name="Ramos L."/>
            <person name="Shuaib M."/>
            <person name="Syed S.H."/>
            <person name="Lone I.N."/>
            <person name="Boopathi R."/>
            <person name="Fontaine E."/>
            <person name="Papai G."/>
            <person name="Tachiwana H."/>
            <person name="Gautier T."/>
            <person name="Skoufias D."/>
            <person name="Padmanabhan K."/>
            <person name="Bednar J."/>
            <person name="Kurumizaka H."/>
            <person name="Schultz P."/>
            <person name="Angelov D."/>
            <person name="Hamiche A."/>
            <person name="Dimitrov S."/>
        </authorList>
    </citation>
    <scope>SUBUNIT</scope>
</reference>
<reference key="24">
    <citation type="journal article" date="2017" name="EMBO Rep.">
        <title>Expansion of the ISWI chromatin remodeler family with new active complexes.</title>
        <authorList>
            <person name="Oppikofer M."/>
            <person name="Bai T."/>
            <person name="Gan Y."/>
            <person name="Haley B."/>
            <person name="Liu P."/>
            <person name="Sandoval W."/>
            <person name="Ciferri C."/>
            <person name="Cochran A.G."/>
        </authorList>
    </citation>
    <scope>FUNCTION</scope>
    <scope>IDENTIFICATION IN THE RSF-1 ISWI CHROMATIN REMODELING COMPLEX</scope>
    <scope>IDENTIFICATION IN THE RSF-5 CHROMATIN REMODELING COMPLEX</scope>
    <scope>INTERACTION WITH SMARCA1 AND SMARCA5</scope>
</reference>
<reference key="25">
    <citation type="journal article" date="2017" name="Nat. Struct. Mol. Biol.">
        <title>Site-specific mapping of the human SUMO proteome reveals co-modification with phosphorylation.</title>
        <authorList>
            <person name="Hendriks I.A."/>
            <person name="Lyon D."/>
            <person name="Young C."/>
            <person name="Jensen L.J."/>
            <person name="Vertegaal A.C."/>
            <person name="Nielsen M.L."/>
        </authorList>
    </citation>
    <scope>SUMOYLATION [LARGE SCALE ANALYSIS] AT LYS-136; LYS-215; LYS-236; LYS-243; LYS-248; LYS-252; LYS-254; LYS-277; LYS-284; LYS-288; LYS-294; LYS-305; LYS-306; LYS-309; LYS-323; LYS-327; LYS-337; LYS-342; LYS-358; LYS-373; LYS-381; LYS-390; LYS-400; LYS-405; LYS-415; LYS-419; LYS-439; LYS-456; LYS-463; LYS-468; LYS-498; LYS-565; LYS-662; LYS-663; LYS-670; LYS-677; LYS-698; LYS-709; LYS-758; LYS-768; LYS-795; LYS-799 AND LYS-1039</scope>
    <scope>IDENTIFICATION BY MASS SPECTROMETRY [LARGE SCALE ANALYSIS]</scope>
</reference>
<comment type="function">
    <text evidence="4 5 6 8">Regulatory subunit of the ATP-dependent RSF-1 and RSF-5 ISWI chromatin-remodeling complexes, which form ordered nucleosome arrays on chromatin and facilitate access to DNA during DNA-templated processes such as DNA replication, transcription, and repair (PubMed:12972596, PubMed:28801535). Binds to core histones together with SMARCA5, and is required for the assembly of regular nucleosome arrays by the RSF-5 ISWI chromatin-remodeling complex (PubMed:12972596). Directly stimulates the ATPase activity of SMARCA1 and SMARCA5 in the RSF-1 and RSF-5 ISWI chromatin-remodeling complexes, respectively (PubMed:28801535). The RSF-1 ISWI chromatin remodeling complex has a lower ATP hydrolysis rate than the RSF-5 ISWI chromatin-remodeling complex (PubMed:28801535). The complexes do not have the ability to slide mononucleosomes to the center of a DNA template (PubMed:28801535). Facilitates transcription of hepatitis B virus (HBV) genes by the pX transcription activator. In case of infection by HBV, together with pX, it represses TNF-alpha induced NF-kappa-B transcription activation. Represses transcription when artificially recruited to chromatin by fusion to a heterogeneous DNA binding domain (PubMed:11788598, PubMed:11944984).</text>
</comment>
<comment type="subunit">
    <text evidence="4 5 6 7 8">Component of the RSF-1 ISWI chromatin-remodeling complex at least composed of SMARCA1 and RSF1 (PubMed:28801535). Within the RSF-1 ISWI chromatin-remodeling complex interacts with SMARCA1 (PubMed:28801535). Component of the RSF-5 ISWI chromatin-remodeling complex (also called the RSF complex) at least composed of SMARCA5/SNF2H and RSF1 (PubMed:12972596, PubMed:28801535). Within the RSF-5 ISWI chromatin-remodeling complex interacts with SMARCA5/SNF2H; the interaction is direct (PubMed:12972596, PubMed:28801535). Identified in a centromere complex containing histones H2A, H2B and H4, and at least CENPA, CENPB, CENPC, CENPT, CENPN, HJURP, SUPT16H, SSRP1 and RSF1 (PubMed:27499292). Also binds the HBV pX/HBx protein, which is required to activate transcription of the viral genome (PubMed:11788598, PubMed:11944984).</text>
</comment>
<comment type="interaction">
    <interactant intactId="EBI-926768">
        <id>Q96T23</id>
    </interactant>
    <interactant intactId="EBI-389432">
        <id>P09429</id>
        <label>HMGB1</label>
    </interactant>
    <organismsDiffer>false</organismsDiffer>
    <experiments>3</experiments>
</comment>
<comment type="interaction">
    <interactant intactId="EBI-926768">
        <id>Q96T23</id>
    </interactant>
    <interactant intactId="EBI-352588">
        <id>O60264</id>
        <label>SMARCA5</label>
    </interactant>
    <organismsDiffer>false</organismsDiffer>
    <experiments>6</experiments>
</comment>
<comment type="subcellular location">
    <subcellularLocation>
        <location evidence="4 5 6">Nucleus</location>
    </subcellularLocation>
    <text evidence="6">Localization is diffuse during mitosis (PubMed:12972596). Co-localizes with SMARCA5 in the nucleus (PubMed:12972596).</text>
</comment>
<comment type="alternative products">
    <event type="alternative splicing"/>
    <isoform>
        <id>Q96T23-1</id>
        <name>1</name>
        <name>Alpha</name>
        <name>XAP8alpha</name>
        <sequence type="displayed"/>
    </isoform>
    <isoform>
        <id>Q96T23-2</id>
        <name>2</name>
        <name>Beta</name>
        <sequence type="described" ref="VSP_012500"/>
    </isoform>
    <isoform>
        <id>Q96T23-3</id>
        <name>3</name>
        <name>Gamma</name>
        <sequence type="described" ref="VSP_012499"/>
    </isoform>
    <text>Experimental confirmation may be lacking for some isoforms.</text>
</comment>
<comment type="tissue specificity">
    <text evidence="6">Ubiquitously expressed. Highly expressed in the heart, skeletal muscle, kidney and placenta (PubMed:12972596). Expressed at low levels in the brain and colon (PubMed:12972596).</text>
</comment>
<comment type="PTM">
    <text evidence="6">Phosphorylated.</text>
</comment>
<comment type="sequence caution" evidence="11">
    <conflict type="frameshift">
        <sequence resource="EMBL-CDS" id="AAG43114"/>
    </conflict>
</comment>
<comment type="sequence caution" evidence="11">
    <conflict type="miscellaneous discrepancy">
        <sequence resource="EMBL-CDS" id="AAH46124"/>
    </conflict>
    <text>Contaminating sequence. Potential poly-A sequence.</text>
</comment>
<comment type="sequence caution" evidence="11">
    <conflict type="erroneous initiation">
        <sequence resource="EMBL-CDS" id="AAK57515"/>
    </conflict>
</comment>
<comment type="sequence caution" evidence="11">
    <conflict type="erroneous initiation">
        <sequence resource="EMBL-CDS" id="BAA91591"/>
    </conflict>
</comment>
<comment type="online information" name="Atlas of Genetics and Cytogenetics in Oncology and Haematology">
    <link uri="https://atlasgeneticsoncology.org/gene/44107/RSF1"/>
</comment>
<dbReference type="EMBL" id="AF380176">
    <property type="protein sequence ID" value="AAK57515.1"/>
    <property type="status" value="ALT_INIT"/>
    <property type="molecule type" value="mRNA"/>
</dbReference>
<dbReference type="EMBL" id="AF227948">
    <property type="protein sequence ID" value="AAF61709.2"/>
    <property type="molecule type" value="mRNA"/>
</dbReference>
<dbReference type="EMBL" id="AP000580">
    <property type="status" value="NOT_ANNOTATED_CDS"/>
    <property type="molecule type" value="Genomic_DNA"/>
</dbReference>
<dbReference type="EMBL" id="AP000609">
    <property type="status" value="NOT_ANNOTATED_CDS"/>
    <property type="molecule type" value="Genomic_DNA"/>
</dbReference>
<dbReference type="EMBL" id="AP002343">
    <property type="status" value="NOT_ANNOTATED_CDS"/>
    <property type="molecule type" value="Genomic_DNA"/>
</dbReference>
<dbReference type="EMBL" id="AF059317">
    <property type="protein sequence ID" value="AAG43114.1"/>
    <property type="status" value="ALT_SEQ"/>
    <property type="molecule type" value="mRNA"/>
</dbReference>
<dbReference type="EMBL" id="BC046124">
    <property type="protein sequence ID" value="AAH46124.2"/>
    <property type="status" value="ALT_SEQ"/>
    <property type="molecule type" value="mRNA"/>
</dbReference>
<dbReference type="EMBL" id="AK001268">
    <property type="protein sequence ID" value="BAA91591.1"/>
    <property type="status" value="ALT_INIT"/>
    <property type="molecule type" value="mRNA"/>
</dbReference>
<dbReference type="CCDS" id="CCDS8253.1">
    <molecule id="Q96T23-1"/>
</dbReference>
<dbReference type="RefSeq" id="NP_057662.3">
    <molecule id="Q96T23-1"/>
    <property type="nucleotide sequence ID" value="NM_016578.3"/>
</dbReference>
<dbReference type="SMR" id="Q96T23"/>
<dbReference type="BioGRID" id="119724">
    <property type="interactions" value="136"/>
</dbReference>
<dbReference type="ComplexPortal" id="CPX-455">
    <property type="entry name" value="RSF complex"/>
</dbReference>
<dbReference type="CORUM" id="Q96T23"/>
<dbReference type="FunCoup" id="Q96T23">
    <property type="interactions" value="4260"/>
</dbReference>
<dbReference type="IntAct" id="Q96T23">
    <property type="interactions" value="66"/>
</dbReference>
<dbReference type="MINT" id="Q96T23"/>
<dbReference type="STRING" id="9606.ENSP00000311513"/>
<dbReference type="GlyGen" id="Q96T23">
    <property type="glycosylation" value="3 sites, 1 N-linked glycan (1 site), 1 O-linked glycan (2 sites)"/>
</dbReference>
<dbReference type="iPTMnet" id="Q96T23"/>
<dbReference type="PhosphoSitePlus" id="Q96T23"/>
<dbReference type="SwissPalm" id="Q96T23"/>
<dbReference type="BioMuta" id="RSF1"/>
<dbReference type="DMDM" id="251757329"/>
<dbReference type="jPOST" id="Q96T23"/>
<dbReference type="MassIVE" id="Q96T23"/>
<dbReference type="PaxDb" id="9606-ENSP00000311513"/>
<dbReference type="PeptideAtlas" id="Q96T23"/>
<dbReference type="ProteomicsDB" id="78175">
    <molecule id="Q96T23-1"/>
</dbReference>
<dbReference type="ProteomicsDB" id="78176">
    <molecule id="Q96T23-2"/>
</dbReference>
<dbReference type="ProteomicsDB" id="78177">
    <molecule id="Q96T23-3"/>
</dbReference>
<dbReference type="Pumba" id="Q96T23"/>
<dbReference type="Antibodypedia" id="31265">
    <property type="antibodies" value="116 antibodies from 29 providers"/>
</dbReference>
<dbReference type="DNASU" id="51773"/>
<dbReference type="Ensembl" id="ENST00000308488.11">
    <molecule id="Q96T23-1"/>
    <property type="protein sequence ID" value="ENSP00000311513.6"/>
    <property type="gene ID" value="ENSG00000048649.14"/>
</dbReference>
<dbReference type="Ensembl" id="ENST00000480887.5">
    <molecule id="Q96T23-3"/>
    <property type="protein sequence ID" value="ENSP00000434509.1"/>
    <property type="gene ID" value="ENSG00000048649.14"/>
</dbReference>
<dbReference type="GeneID" id="51773"/>
<dbReference type="KEGG" id="hsa:51773"/>
<dbReference type="MANE-Select" id="ENST00000308488.11">
    <property type="protein sequence ID" value="ENSP00000311513.6"/>
    <property type="RefSeq nucleotide sequence ID" value="NM_016578.4"/>
    <property type="RefSeq protein sequence ID" value="NP_057662.3"/>
</dbReference>
<dbReference type="UCSC" id="uc001oym.4">
    <molecule id="Q96T23-1"/>
    <property type="organism name" value="human"/>
</dbReference>
<dbReference type="AGR" id="HGNC:18118"/>
<dbReference type="CTD" id="51773"/>
<dbReference type="DisGeNET" id="51773"/>
<dbReference type="GeneCards" id="RSF1"/>
<dbReference type="HGNC" id="HGNC:18118">
    <property type="gene designation" value="RSF1"/>
</dbReference>
<dbReference type="HPA" id="ENSG00000048649">
    <property type="expression patterns" value="Low tissue specificity"/>
</dbReference>
<dbReference type="MIM" id="608522">
    <property type="type" value="gene"/>
</dbReference>
<dbReference type="neXtProt" id="NX_Q96T23"/>
<dbReference type="OpenTargets" id="ENSG00000048649"/>
<dbReference type="PharmGKB" id="PA29210"/>
<dbReference type="VEuPathDB" id="HostDB:ENSG00000048649"/>
<dbReference type="eggNOG" id="ENOG502QW8S">
    <property type="taxonomic scope" value="Eukaryota"/>
</dbReference>
<dbReference type="GeneTree" id="ENSGT00530000064411"/>
<dbReference type="HOGENOM" id="CLU_002056_2_0_1"/>
<dbReference type="InParanoid" id="Q96T23"/>
<dbReference type="OMA" id="SCDNTHG"/>
<dbReference type="OrthoDB" id="10055895at2759"/>
<dbReference type="PAN-GO" id="Q96T23">
    <property type="GO annotations" value="5 GO annotations based on evolutionary models"/>
</dbReference>
<dbReference type="PhylomeDB" id="Q96T23"/>
<dbReference type="TreeFam" id="TF106405"/>
<dbReference type="PathwayCommons" id="Q96T23"/>
<dbReference type="Reactome" id="R-HSA-606279">
    <property type="pathway name" value="Deposition of new CENPA-containing nucleosomes at the centromere"/>
</dbReference>
<dbReference type="SignaLink" id="Q96T23"/>
<dbReference type="SIGNOR" id="Q96T23"/>
<dbReference type="BioGRID-ORCS" id="51773">
    <property type="hits" value="23 hits in 1160 CRISPR screens"/>
</dbReference>
<dbReference type="ChiTaRS" id="RSF1">
    <property type="organism name" value="human"/>
</dbReference>
<dbReference type="GeneWiki" id="RSF1"/>
<dbReference type="GenomeRNAi" id="51773"/>
<dbReference type="Pharos" id="Q96T23">
    <property type="development level" value="Tbio"/>
</dbReference>
<dbReference type="PRO" id="PR:Q96T23"/>
<dbReference type="Proteomes" id="UP000005640">
    <property type="component" value="Chromosome 11"/>
</dbReference>
<dbReference type="RNAct" id="Q96T23">
    <property type="molecule type" value="protein"/>
</dbReference>
<dbReference type="Bgee" id="ENSG00000048649">
    <property type="expression patterns" value="Expressed in calcaneal tendon and 198 other cell types or tissues"/>
</dbReference>
<dbReference type="ExpressionAtlas" id="Q96T23">
    <property type="expression patterns" value="baseline and differential"/>
</dbReference>
<dbReference type="GO" id="GO:0005654">
    <property type="term" value="C:nucleoplasm"/>
    <property type="evidence" value="ECO:0000314"/>
    <property type="project" value="HPA"/>
</dbReference>
<dbReference type="GO" id="GO:0005634">
    <property type="term" value="C:nucleus"/>
    <property type="evidence" value="ECO:0000314"/>
    <property type="project" value="UniProtKB"/>
</dbReference>
<dbReference type="GO" id="GO:0031213">
    <property type="term" value="C:RSF complex"/>
    <property type="evidence" value="ECO:0000353"/>
    <property type="project" value="UniProtKB"/>
</dbReference>
<dbReference type="GO" id="GO:0042393">
    <property type="term" value="F:histone binding"/>
    <property type="evidence" value="ECO:0000314"/>
    <property type="project" value="UniProtKB"/>
</dbReference>
<dbReference type="GO" id="GO:0140751">
    <property type="term" value="F:histone octamer slider activity"/>
    <property type="evidence" value="ECO:0000314"/>
    <property type="project" value="GO_Central"/>
</dbReference>
<dbReference type="GO" id="GO:0008270">
    <property type="term" value="F:zinc ion binding"/>
    <property type="evidence" value="ECO:0007669"/>
    <property type="project" value="UniProtKB-KW"/>
</dbReference>
<dbReference type="GO" id="GO:0006325">
    <property type="term" value="P:chromatin organization"/>
    <property type="evidence" value="ECO:0000314"/>
    <property type="project" value="ComplexPortal"/>
</dbReference>
<dbReference type="GO" id="GO:0006338">
    <property type="term" value="P:chromatin remodeling"/>
    <property type="evidence" value="ECO:0000314"/>
    <property type="project" value="UniProtKB"/>
</dbReference>
<dbReference type="GO" id="GO:0006352">
    <property type="term" value="P:DNA-templated transcription initiation"/>
    <property type="evidence" value="ECO:0000314"/>
    <property type="project" value="UniProtKB"/>
</dbReference>
<dbReference type="GO" id="GO:0043392">
    <property type="term" value="P:negative regulation of DNA binding"/>
    <property type="evidence" value="ECO:0000314"/>
    <property type="project" value="UniProtKB"/>
</dbReference>
<dbReference type="GO" id="GO:0045892">
    <property type="term" value="P:negative regulation of DNA-templated transcription"/>
    <property type="evidence" value="ECO:0000314"/>
    <property type="project" value="UniProtKB"/>
</dbReference>
<dbReference type="GO" id="GO:0006334">
    <property type="term" value="P:nucleosome assembly"/>
    <property type="evidence" value="ECO:0000314"/>
    <property type="project" value="UniProtKB"/>
</dbReference>
<dbReference type="GO" id="GO:0045893">
    <property type="term" value="P:positive regulation of DNA-templated transcription"/>
    <property type="evidence" value="ECO:0000314"/>
    <property type="project" value="UniProtKB"/>
</dbReference>
<dbReference type="GO" id="GO:0050434">
    <property type="term" value="P:positive regulation of viral transcription"/>
    <property type="evidence" value="ECO:0000314"/>
    <property type="project" value="UniProtKB"/>
</dbReference>
<dbReference type="GO" id="GO:0006355">
    <property type="term" value="P:regulation of DNA-templated transcription"/>
    <property type="evidence" value="ECO:0000314"/>
    <property type="project" value="ComplexPortal"/>
</dbReference>
<dbReference type="CDD" id="cd15543">
    <property type="entry name" value="PHD_RSF1"/>
    <property type="match status" value="1"/>
</dbReference>
<dbReference type="FunFam" id="3.30.40.10:FF:000228">
    <property type="entry name" value="Remodeling and spacing factor 1"/>
    <property type="match status" value="1"/>
</dbReference>
<dbReference type="Gene3D" id="3.30.40.10">
    <property type="entry name" value="Zinc/RING finger domain, C3HC4 (zinc finger)"/>
    <property type="match status" value="1"/>
</dbReference>
<dbReference type="InterPro" id="IPR028938">
    <property type="entry name" value="Rsf1-like"/>
</dbReference>
<dbReference type="InterPro" id="IPR028942">
    <property type="entry name" value="WHIM1_dom"/>
</dbReference>
<dbReference type="InterPro" id="IPR019786">
    <property type="entry name" value="Zinc_finger_PHD-type_CS"/>
</dbReference>
<dbReference type="InterPro" id="IPR011011">
    <property type="entry name" value="Znf_FYVE_PHD"/>
</dbReference>
<dbReference type="InterPro" id="IPR001965">
    <property type="entry name" value="Znf_PHD"/>
</dbReference>
<dbReference type="InterPro" id="IPR019787">
    <property type="entry name" value="Znf_PHD-finger"/>
</dbReference>
<dbReference type="InterPro" id="IPR013083">
    <property type="entry name" value="Znf_RING/FYVE/PHD"/>
</dbReference>
<dbReference type="PANTHER" id="PTHR14296">
    <property type="entry name" value="REMODELING AND SPACING FACTOR 1"/>
    <property type="match status" value="1"/>
</dbReference>
<dbReference type="PANTHER" id="PTHR14296:SF16">
    <property type="entry name" value="REMODELING AND SPACING FACTOR 1"/>
    <property type="match status" value="1"/>
</dbReference>
<dbReference type="Pfam" id="PF00628">
    <property type="entry name" value="PHD"/>
    <property type="match status" value="1"/>
</dbReference>
<dbReference type="Pfam" id="PF15612">
    <property type="entry name" value="WHIM1"/>
    <property type="match status" value="1"/>
</dbReference>
<dbReference type="SMART" id="SM00249">
    <property type="entry name" value="PHD"/>
    <property type="match status" value="1"/>
</dbReference>
<dbReference type="SUPFAM" id="SSF57903">
    <property type="entry name" value="FYVE/PHD zinc finger"/>
    <property type="match status" value="1"/>
</dbReference>
<dbReference type="PROSITE" id="PS01359">
    <property type="entry name" value="ZF_PHD_1"/>
    <property type="match status" value="1"/>
</dbReference>
<dbReference type="PROSITE" id="PS50016">
    <property type="entry name" value="ZF_PHD_2"/>
    <property type="match status" value="1"/>
</dbReference>
<name>RSF1_HUMAN</name>
<evidence type="ECO:0000255" key="1"/>
<evidence type="ECO:0000255" key="2">
    <source>
        <dbReference type="PROSITE-ProRule" id="PRU00146"/>
    </source>
</evidence>
<evidence type="ECO:0000256" key="3">
    <source>
        <dbReference type="SAM" id="MobiDB-lite"/>
    </source>
</evidence>
<evidence type="ECO:0000269" key="4">
    <source>
    </source>
</evidence>
<evidence type="ECO:0000269" key="5">
    <source>
    </source>
</evidence>
<evidence type="ECO:0000269" key="6">
    <source>
    </source>
</evidence>
<evidence type="ECO:0000269" key="7">
    <source>
    </source>
</evidence>
<evidence type="ECO:0000269" key="8">
    <source>
    </source>
</evidence>
<evidence type="ECO:0000303" key="9">
    <source>
    </source>
</evidence>
<evidence type="ECO:0000303" key="10">
    <source>
    </source>
</evidence>
<evidence type="ECO:0000305" key="11"/>
<evidence type="ECO:0007744" key="12">
    <source>
    </source>
</evidence>
<evidence type="ECO:0007744" key="13">
    <source>
    </source>
</evidence>
<evidence type="ECO:0007744" key="14">
    <source>
    </source>
</evidence>
<evidence type="ECO:0007744" key="15">
    <source>
    </source>
</evidence>
<evidence type="ECO:0007744" key="16">
    <source>
    </source>
</evidence>
<evidence type="ECO:0007744" key="17">
    <source>
    </source>
</evidence>
<evidence type="ECO:0007744" key="18">
    <source>
    </source>
</evidence>
<evidence type="ECO:0007744" key="19">
    <source>
    </source>
</evidence>
<evidence type="ECO:0007744" key="20">
    <source>
    </source>
</evidence>
<evidence type="ECO:0007744" key="21">
    <source>
    </source>
</evidence>
<evidence type="ECO:0007744" key="22">
    <source>
    </source>
</evidence>
<evidence type="ECO:0007744" key="23">
    <source>
    </source>
</evidence>
<evidence type="ECO:0007744" key="24">
    <source>
    </source>
</evidence>
<evidence type="ECO:0007744" key="25">
    <source>
    </source>
</evidence>
<evidence type="ECO:0007744" key="26">
    <source>
    </source>
</evidence>
<gene>
    <name type="primary">RSF1</name>
    <name type="synonym">HBXAP</name>
    <name type="synonym">XAP8</name>
</gene>
<accession>Q96T23</accession>
<accession>Q86X86</accession>
<accession>Q9H3L8</accession>
<accession>Q9NVZ8</accession>
<accession>Q9NYU0</accession>
<proteinExistence type="evidence at protein level"/>
<feature type="chain" id="PRO_0000059326" description="Remodeling and spacing factor 1">
    <location>
        <begin position="1"/>
        <end position="1441"/>
    </location>
</feature>
<feature type="domain" description="DDT">
    <location>
        <begin position="17"/>
        <end position="84"/>
    </location>
</feature>
<feature type="zinc finger region" description="PHD-type" evidence="2">
    <location>
        <begin position="891"/>
        <end position="941"/>
    </location>
</feature>
<feature type="region of interest" description="Disordered" evidence="3">
    <location>
        <begin position="215"/>
        <end position="283"/>
    </location>
</feature>
<feature type="region of interest" description="Disordered" evidence="3">
    <location>
        <begin position="330"/>
        <end position="385"/>
    </location>
</feature>
<feature type="region of interest" description="Disordered" evidence="3">
    <location>
        <begin position="467"/>
        <end position="634"/>
    </location>
</feature>
<feature type="region of interest" description="Disordered" evidence="3">
    <location>
        <begin position="675"/>
        <end position="887"/>
    </location>
</feature>
<feature type="region of interest" description="Disordered" evidence="3">
    <location>
        <begin position="983"/>
        <end position="1007"/>
    </location>
</feature>
<feature type="region of interest" description="Disordered" evidence="3">
    <location>
        <begin position="1063"/>
        <end position="1428"/>
    </location>
</feature>
<feature type="coiled-coil region" evidence="1">
    <location>
        <begin position="942"/>
        <end position="1012"/>
    </location>
</feature>
<feature type="compositionally biased region" description="Polar residues" evidence="3">
    <location>
        <begin position="215"/>
        <end position="227"/>
    </location>
</feature>
<feature type="compositionally biased region" description="Basic and acidic residues" evidence="3">
    <location>
        <begin position="234"/>
        <end position="257"/>
    </location>
</feature>
<feature type="compositionally biased region" description="Basic and acidic residues" evidence="3">
    <location>
        <begin position="274"/>
        <end position="283"/>
    </location>
</feature>
<feature type="compositionally biased region" description="Basic and acidic residues" evidence="3">
    <location>
        <begin position="330"/>
        <end position="340"/>
    </location>
</feature>
<feature type="compositionally biased region" description="Basic and acidic residues" evidence="3">
    <location>
        <begin position="359"/>
        <end position="378"/>
    </location>
</feature>
<feature type="compositionally biased region" description="Basic and acidic residues" evidence="3">
    <location>
        <begin position="467"/>
        <end position="480"/>
    </location>
</feature>
<feature type="compositionally biased region" description="Polar residues" evidence="3">
    <location>
        <begin position="482"/>
        <end position="498"/>
    </location>
</feature>
<feature type="compositionally biased region" description="Basic and acidic residues" evidence="3">
    <location>
        <begin position="500"/>
        <end position="514"/>
    </location>
</feature>
<feature type="compositionally biased region" description="Polar residues" evidence="3">
    <location>
        <begin position="552"/>
        <end position="562"/>
    </location>
</feature>
<feature type="compositionally biased region" description="Basic and acidic residues" evidence="3">
    <location>
        <begin position="565"/>
        <end position="601"/>
    </location>
</feature>
<feature type="compositionally biased region" description="Basic and acidic residues" evidence="3">
    <location>
        <begin position="609"/>
        <end position="621"/>
    </location>
</feature>
<feature type="compositionally biased region" description="Basic and acidic residues" evidence="3">
    <location>
        <begin position="753"/>
        <end position="770"/>
    </location>
</feature>
<feature type="compositionally biased region" description="Basic and acidic residues" evidence="3">
    <location>
        <begin position="789"/>
        <end position="802"/>
    </location>
</feature>
<feature type="compositionally biased region" description="Basic and acidic residues" evidence="3">
    <location>
        <begin position="816"/>
        <end position="831"/>
    </location>
</feature>
<feature type="compositionally biased region" description="Low complexity" evidence="3">
    <location>
        <begin position="864"/>
        <end position="873"/>
    </location>
</feature>
<feature type="compositionally biased region" description="Acidic residues" evidence="3">
    <location>
        <begin position="874"/>
        <end position="887"/>
    </location>
</feature>
<feature type="compositionally biased region" description="Acidic residues" evidence="3">
    <location>
        <begin position="1094"/>
        <end position="1107"/>
    </location>
</feature>
<feature type="compositionally biased region" description="Acidic residues" evidence="3">
    <location>
        <begin position="1120"/>
        <end position="1141"/>
    </location>
</feature>
<feature type="compositionally biased region" description="Basic residues" evidence="3">
    <location>
        <begin position="1146"/>
        <end position="1169"/>
    </location>
</feature>
<feature type="compositionally biased region" description="Acidic residues" evidence="3">
    <location>
        <begin position="1189"/>
        <end position="1199"/>
    </location>
</feature>
<feature type="compositionally biased region" description="Basic residues" evidence="3">
    <location>
        <begin position="1203"/>
        <end position="1212"/>
    </location>
</feature>
<feature type="compositionally biased region" description="Basic residues" evidence="3">
    <location>
        <begin position="1229"/>
        <end position="1244"/>
    </location>
</feature>
<feature type="compositionally biased region" description="Acidic residues" evidence="3">
    <location>
        <begin position="1280"/>
        <end position="1292"/>
    </location>
</feature>
<feature type="compositionally biased region" description="Basic and acidic residues" evidence="3">
    <location>
        <begin position="1335"/>
        <end position="1344"/>
    </location>
</feature>
<feature type="compositionally biased region" description="Polar residues" evidence="3">
    <location>
        <begin position="1394"/>
        <end position="1408"/>
    </location>
</feature>
<feature type="modified residue" description="Phosphoserine" evidence="18 19">
    <location>
        <position position="227"/>
    </location>
</feature>
<feature type="modified residue" description="Phosphoserine" evidence="20">
    <location>
        <position position="392"/>
    </location>
</feature>
<feature type="modified residue" description="Phosphoserine" evidence="13 18 19 20">
    <location>
        <position position="397"/>
    </location>
</feature>
<feature type="modified residue" description="Phosphoserine" evidence="20">
    <location>
        <position position="429"/>
    </location>
</feature>
<feature type="modified residue" description="Phosphoserine" evidence="18 20">
    <location>
        <position position="473"/>
    </location>
</feature>
<feature type="modified residue" description="Phosphoserine" evidence="14">
    <location>
        <position position="524"/>
    </location>
</feature>
<feature type="modified residue" description="Phosphoserine" evidence="20">
    <location>
        <position position="570"/>
    </location>
</feature>
<feature type="modified residue" description="Phosphoserine" evidence="13 18 19 20 21">
    <location>
        <position position="604"/>
    </location>
</feature>
<feature type="modified residue" description="Phosphoserine" evidence="13 15 20">
    <location>
        <position position="622"/>
    </location>
</feature>
<feature type="modified residue" description="Phosphothreonine" evidence="21">
    <location>
        <position position="628"/>
    </location>
</feature>
<feature type="modified residue" description="Phosphoserine" evidence="15 21">
    <location>
        <position position="629"/>
    </location>
</feature>
<feature type="modified residue" description="Phosphoserine" evidence="18 19 20">
    <location>
        <position position="748"/>
    </location>
</feature>
<feature type="modified residue" description="Phosphoserine" evidence="18">
    <location>
        <position position="882"/>
    </location>
</feature>
<feature type="modified residue" description="N6-acetyllysine" evidence="16">
    <location>
        <position position="1050"/>
    </location>
</feature>
<feature type="modified residue" description="Phosphoserine" evidence="13">
    <location>
        <position position="1096"/>
    </location>
</feature>
<feature type="modified residue" description="Phosphoserine" evidence="13">
    <location>
        <position position="1098"/>
    </location>
</feature>
<feature type="modified residue" description="Phosphoserine" evidence="13">
    <location>
        <position position="1105"/>
    </location>
</feature>
<feature type="modified residue" description="Phosphoserine" evidence="15 19">
    <location>
        <position position="1221"/>
    </location>
</feature>
<feature type="modified residue" description="Phosphoserine" evidence="15">
    <location>
        <position position="1223"/>
    </location>
</feature>
<feature type="modified residue" description="Phosphoserine" evidence="15 19">
    <location>
        <position position="1226"/>
    </location>
</feature>
<feature type="modified residue" description="Phosphoserine" evidence="19">
    <location>
        <position position="1258"/>
    </location>
</feature>
<feature type="modified residue" description="Phosphoserine" evidence="15">
    <location>
        <position position="1277"/>
    </location>
</feature>
<feature type="modified residue" description="Phosphothreonine" evidence="15">
    <location>
        <position position="1278"/>
    </location>
</feature>
<feature type="modified residue" description="Phosphothreonine" evidence="15 17 19 20 21">
    <location>
        <position position="1305"/>
    </location>
</feature>
<feature type="modified residue" description="Phosphoserine" evidence="14">
    <location>
        <position position="1325"/>
    </location>
</feature>
<feature type="modified residue" description="Phosphoserine" evidence="20">
    <location>
        <position position="1336"/>
    </location>
</feature>
<feature type="modified residue" description="N6-acetyllysine" evidence="16">
    <location>
        <position position="1339"/>
    </location>
</feature>
<feature type="modified residue" description="Phosphoserine" evidence="12 13 17 18 19 20 21">
    <location>
        <position position="1345"/>
    </location>
</feature>
<feature type="modified residue" description="Phosphoserine" evidence="13 15 17 18 20">
    <location>
        <position position="1359"/>
    </location>
</feature>
<feature type="modified residue" description="Phosphoserine" evidence="13 17 18 19 20">
    <location>
        <position position="1375"/>
    </location>
</feature>
<feature type="cross-link" description="Glycyl lysine isopeptide (Lys-Gly) (interchain with G-Cter in SUMO2)" evidence="26">
    <location>
        <position position="136"/>
    </location>
</feature>
<feature type="cross-link" description="Glycyl lysine isopeptide (Lys-Gly) (interchain with G-Cter in SUMO2)" evidence="26">
    <location>
        <position position="215"/>
    </location>
</feature>
<feature type="cross-link" description="Glycyl lysine isopeptide (Lys-Gly) (interchain with G-Cter in SUMO2)" evidence="26">
    <location>
        <position position="236"/>
    </location>
</feature>
<feature type="cross-link" description="Glycyl lysine isopeptide (Lys-Gly) (interchain with G-Cter in SUMO2)" evidence="24 26">
    <location>
        <position position="243"/>
    </location>
</feature>
<feature type="cross-link" description="Glycyl lysine isopeptide (Lys-Gly) (interchain with G-Cter in SUMO2)" evidence="26">
    <location>
        <position position="248"/>
    </location>
</feature>
<feature type="cross-link" description="Glycyl lysine isopeptide (Lys-Gly) (interchain with G-Cter in SUMO2)" evidence="26">
    <location>
        <position position="252"/>
    </location>
</feature>
<feature type="cross-link" description="Glycyl lysine isopeptide (Lys-Gly) (interchain with G-Cter in SUMO2)" evidence="23 24 25 26">
    <location>
        <position position="254"/>
    </location>
</feature>
<feature type="cross-link" description="Glycyl lysine isopeptide (Lys-Gly) (interchain with G-Cter in SUMO1); alternate" evidence="22">
    <location>
        <position position="277"/>
    </location>
</feature>
<feature type="cross-link" description="Glycyl lysine isopeptide (Lys-Gly) (interchain with G-Cter in SUMO2); alternate" evidence="22 23 24 25 26">
    <location>
        <position position="277"/>
    </location>
</feature>
<feature type="cross-link" description="Glycyl lysine isopeptide (Lys-Gly) (interchain with G-Cter in SUMO2)" evidence="24 25 26">
    <location>
        <position position="284"/>
    </location>
</feature>
<feature type="cross-link" description="Glycyl lysine isopeptide (Lys-Gly) (interchain with G-Cter in SUMO2)" evidence="26">
    <location>
        <position position="288"/>
    </location>
</feature>
<feature type="cross-link" description="Glycyl lysine isopeptide (Lys-Gly) (interchain with G-Cter in SUMO2)" evidence="23 24 25 26">
    <location>
        <position position="294"/>
    </location>
</feature>
<feature type="cross-link" description="Glycyl lysine isopeptide (Lys-Gly) (interchain with G-Cter in SUMO2)" evidence="26">
    <location>
        <position position="305"/>
    </location>
</feature>
<feature type="cross-link" description="Glycyl lysine isopeptide (Lys-Gly) (interchain with G-Cter in SUMO2)" evidence="26">
    <location>
        <position position="306"/>
    </location>
</feature>
<feature type="cross-link" description="Glycyl lysine isopeptide (Lys-Gly) (interchain with G-Cter in SUMO2)" evidence="23 24 25 26">
    <location>
        <position position="309"/>
    </location>
</feature>
<feature type="cross-link" description="Glycyl lysine isopeptide (Lys-Gly) (interchain with G-Cter in SUMO2)" evidence="23 24 25 26">
    <location>
        <position position="323"/>
    </location>
</feature>
<feature type="cross-link" description="Glycyl lysine isopeptide (Lys-Gly) (interchain with G-Cter in SUMO2)" evidence="26">
    <location>
        <position position="327"/>
    </location>
</feature>
<feature type="cross-link" description="Glycyl lysine isopeptide (Lys-Gly) (interchain with G-Cter in SUMO2)" evidence="23 26">
    <location>
        <position position="337"/>
    </location>
</feature>
<feature type="cross-link" description="Glycyl lysine isopeptide (Lys-Gly) (interchain with G-Cter in SUMO2)" evidence="26">
    <location>
        <position position="342"/>
    </location>
</feature>
<feature type="cross-link" description="Glycyl lysine isopeptide (Lys-Gly) (interchain with G-Cter in SUMO2)" evidence="26">
    <location>
        <position position="358"/>
    </location>
</feature>
<feature type="cross-link" description="Glycyl lysine isopeptide (Lys-Gly) (interchain with G-Cter in SUMO2)" evidence="26">
    <location>
        <position position="373"/>
    </location>
</feature>
<feature type="cross-link" description="Glycyl lysine isopeptide (Lys-Gly) (interchain with G-Cter in SUMO2)" evidence="26">
    <location>
        <position position="381"/>
    </location>
</feature>
<feature type="cross-link" description="Glycyl lysine isopeptide (Lys-Gly) (interchain with G-Cter in SUMO2)" evidence="23 24 26">
    <location>
        <position position="390"/>
    </location>
</feature>
<feature type="cross-link" description="Glycyl lysine isopeptide (Lys-Gly) (interchain with G-Cter in SUMO2)" evidence="26">
    <location>
        <position position="400"/>
    </location>
</feature>
<feature type="cross-link" description="Glycyl lysine isopeptide (Lys-Gly) (interchain with G-Cter in SUMO2)" evidence="26">
    <location>
        <position position="405"/>
    </location>
</feature>
<feature type="cross-link" description="Glycyl lysine isopeptide (Lys-Gly) (interchain with G-Cter in SUMO2)" evidence="24 26">
    <location>
        <position position="415"/>
    </location>
</feature>
<feature type="cross-link" description="Glycyl lysine isopeptide (Lys-Gly) (interchain with G-Cter in SUMO2)" evidence="23 24 25 26">
    <location>
        <position position="419"/>
    </location>
</feature>
<feature type="cross-link" description="Glycyl lysine isopeptide (Lys-Gly) (interchain with G-Cter in SUMO2)" evidence="26">
    <location>
        <position position="439"/>
    </location>
</feature>
<feature type="cross-link" description="Glycyl lysine isopeptide (Lys-Gly) (interchain with G-Cter in SUMO1); alternate" evidence="22">
    <location>
        <position position="456"/>
    </location>
</feature>
<feature type="cross-link" description="Glycyl lysine isopeptide (Lys-Gly) (interchain with G-Cter in SUMO2); alternate" evidence="22 23 24 25 26">
    <location>
        <position position="456"/>
    </location>
</feature>
<feature type="cross-link" description="Glycyl lysine isopeptide (Lys-Gly) (interchain with G-Cter in SUMO2)" evidence="26">
    <location>
        <position position="463"/>
    </location>
</feature>
<feature type="cross-link" description="Glycyl lysine isopeptide (Lys-Gly) (interchain with G-Cter in SUMO2)" evidence="23 26">
    <location>
        <position position="468"/>
    </location>
</feature>
<feature type="cross-link" description="Glycyl lysine isopeptide (Lys-Gly) (interchain with G-Cter in SUMO2)" evidence="26">
    <location>
        <position position="498"/>
    </location>
</feature>
<feature type="cross-link" description="Glycyl lysine isopeptide (Lys-Gly) (interchain with G-Cter in SUMO2)" evidence="26">
    <location>
        <position position="565"/>
    </location>
</feature>
<feature type="cross-link" description="Glycyl lysine isopeptide (Lys-Gly) (interchain with G-Cter in SUMO2)" evidence="26">
    <location>
        <position position="662"/>
    </location>
</feature>
<feature type="cross-link" description="Glycyl lysine isopeptide (Lys-Gly) (interchain with G-Cter in SUMO2)" evidence="23 26">
    <location>
        <position position="663"/>
    </location>
</feature>
<feature type="cross-link" description="Glycyl lysine isopeptide (Lys-Gly) (interchain with G-Cter in SUMO2)" evidence="23 24 25 26">
    <location>
        <position position="670"/>
    </location>
</feature>
<feature type="cross-link" description="Glycyl lysine isopeptide (Lys-Gly) (interchain with G-Cter in SUMO2)" evidence="23 26">
    <location>
        <position position="677"/>
    </location>
</feature>
<feature type="cross-link" description="Glycyl lysine isopeptide (Lys-Gly) (interchain with G-Cter in SUMO2)" evidence="26">
    <location>
        <position position="698"/>
    </location>
</feature>
<feature type="cross-link" description="Glycyl lysine isopeptide (Lys-Gly) (interchain with G-Cter in SUMO2)" evidence="26">
    <location>
        <position position="709"/>
    </location>
</feature>
<feature type="cross-link" description="Glycyl lysine isopeptide (Lys-Gly) (interchain with G-Cter in SUMO2)" evidence="23 24 26">
    <location>
        <position position="758"/>
    </location>
</feature>
<feature type="cross-link" description="Glycyl lysine isopeptide (Lys-Gly) (interchain with G-Cter in SUMO2)" evidence="23 25 26">
    <location>
        <position position="768"/>
    </location>
</feature>
<feature type="cross-link" description="Glycyl lysine isopeptide (Lys-Gly) (interchain with G-Cter in SUMO2)" evidence="26">
    <location>
        <position position="795"/>
    </location>
</feature>
<feature type="cross-link" description="Glycyl lysine isopeptide (Lys-Gly) (interchain with G-Cter in SUMO2)" evidence="26">
    <location>
        <position position="799"/>
    </location>
</feature>
<feature type="cross-link" description="Glycyl lysine isopeptide (Lys-Gly) (interchain with G-Cter in SUMO2)" evidence="26">
    <location>
        <position position="1039"/>
    </location>
</feature>
<feature type="splice variant" id="VSP_012499" description="In isoform 3." evidence="9 10">
    <location>
        <begin position="1"/>
        <end position="252"/>
    </location>
</feature>
<feature type="splice variant" id="VSP_012500" description="In isoform 2." evidence="10">
    <location>
        <begin position="93"/>
        <end position="123"/>
    </location>
</feature>
<feature type="sequence variant" id="VAR_061741" description="In dbSNP:rs58758035.">
    <original>E</original>
    <variation>D</variation>
    <location>
        <position position="304"/>
    </location>
</feature>
<feature type="sequence variant" id="VAR_020885" description="In dbSNP:rs7950873.">
    <original>S</original>
    <variation>P</variation>
    <location>
        <position position="475"/>
    </location>
</feature>
<feature type="sequence conflict" description="In Ref. 4; AAG43114." evidence="11" ref="4">
    <original>D</original>
    <variation>G</variation>
    <location>
        <position position="132"/>
    </location>
</feature>
<feature type="sequence conflict" description="In Ref. 4; AAG43114." evidence="11" ref="4">
    <original>V</original>
    <variation>G</variation>
    <location>
        <position position="270"/>
    </location>
</feature>
<feature type="sequence conflict" description="In Ref. 4; AAG43114." evidence="11" ref="4">
    <original>V</original>
    <variation>G</variation>
    <location>
        <position position="276"/>
    </location>
</feature>
<feature type="sequence conflict" description="In Ref. 4; AAG43114." evidence="11" ref="4">
    <original>V</original>
    <variation>A</variation>
    <location>
        <position position="287"/>
    </location>
</feature>
<feature type="sequence conflict" description="In Ref. 4; AAG43114." evidence="11" ref="4">
    <original>V</original>
    <variation>G</variation>
    <location>
        <position position="291"/>
    </location>
</feature>
<feature type="sequence conflict" description="In Ref. 4; AAG43114." evidence="11" ref="4">
    <original>K</original>
    <variation>N</variation>
    <location>
        <position position="305"/>
    </location>
</feature>
<feature type="sequence conflict" description="In Ref. 4; AAG43114." evidence="11" ref="4">
    <original>SF</original>
    <variation>PS</variation>
    <location>
        <begin position="314"/>
        <end position="315"/>
    </location>
</feature>
<feature type="sequence conflict" description="In Ref. 4; AAG43114." evidence="11" ref="4">
    <original>F</original>
    <variation>L</variation>
    <location>
        <position position="353"/>
    </location>
</feature>
<feature type="sequence conflict" description="In Ref. 4; AAG43114." evidence="11" ref="4">
    <original>K</original>
    <variation>E</variation>
    <location>
        <position position="381"/>
    </location>
</feature>
<feature type="sequence conflict" description="In Ref. 6; BAA91591." evidence="11" ref="6">
    <original>I</original>
    <variation>V</variation>
    <location>
        <position position="1063"/>
    </location>
</feature>
<feature type="sequence conflict" description="In Ref. 1; AAK57515 and 2; AAF61709." evidence="11" ref="1 2">
    <original>D</original>
    <variation>E</variation>
    <location>
        <position position="1137"/>
    </location>
</feature>
<protein>
    <recommendedName>
        <fullName>Remodeling and spacing factor 1</fullName>
        <shortName>Rsf-1</shortName>
    </recommendedName>
    <alternativeName>
        <fullName>HBV pX-associated protein 8</fullName>
    </alternativeName>
    <alternativeName>
        <fullName>Hepatitis B virus X-associated protein</fullName>
    </alternativeName>
    <alternativeName>
        <fullName>p325 subunit of RSF chromatin-remodeling complex</fullName>
    </alternativeName>
</protein>
<organism>
    <name type="scientific">Homo sapiens</name>
    <name type="common">Human</name>
    <dbReference type="NCBI Taxonomy" id="9606"/>
    <lineage>
        <taxon>Eukaryota</taxon>
        <taxon>Metazoa</taxon>
        <taxon>Chordata</taxon>
        <taxon>Craniata</taxon>
        <taxon>Vertebrata</taxon>
        <taxon>Euteleostomi</taxon>
        <taxon>Mammalia</taxon>
        <taxon>Eutheria</taxon>
        <taxon>Euarchontoglires</taxon>
        <taxon>Primates</taxon>
        <taxon>Haplorrhini</taxon>
        <taxon>Catarrhini</taxon>
        <taxon>Hominidae</taxon>
        <taxon>Homo</taxon>
    </lineage>
</organism>